<protein>
    <recommendedName>
        <fullName>Chymotrypsin-like elastase family member 1</fullName>
        <ecNumber>3.4.21.36</ecNumber>
    </recommendedName>
    <alternativeName>
        <fullName>Elastase I</fullName>
    </alternativeName>
    <alternativeName>
        <fullName>Elastase-1</fullName>
    </alternativeName>
</protein>
<feature type="signal peptide" evidence="1">
    <location>
        <begin position="1"/>
        <end position="16"/>
    </location>
</feature>
<feature type="propeptide" id="PRO_0000027671" description="Activation peptide" evidence="1">
    <location>
        <begin position="17"/>
        <end position="26"/>
    </location>
</feature>
<feature type="chain" id="PRO_0000027672" description="Chymotrypsin-like elastase family member 1">
    <location>
        <begin position="27"/>
        <end position="266"/>
    </location>
</feature>
<feature type="domain" description="Peptidase S1" evidence="4">
    <location>
        <begin position="27"/>
        <end position="264"/>
    </location>
</feature>
<feature type="active site" description="Charge relay system" evidence="1">
    <location>
        <position position="71"/>
    </location>
</feature>
<feature type="active site" description="Charge relay system" evidence="1">
    <location>
        <position position="119"/>
    </location>
</feature>
<feature type="active site" description="Charge relay system" evidence="1">
    <location>
        <position position="214"/>
    </location>
</feature>
<feature type="binding site" evidence="1">
    <location>
        <position position="85"/>
    </location>
    <ligand>
        <name>Ca(2+)</name>
        <dbReference type="ChEBI" id="CHEBI:29108"/>
    </ligand>
</feature>
<feature type="binding site" evidence="1">
    <location>
        <position position="87"/>
    </location>
    <ligand>
        <name>Ca(2+)</name>
        <dbReference type="ChEBI" id="CHEBI:29108"/>
    </ligand>
</feature>
<feature type="binding site" evidence="1">
    <location>
        <position position="90"/>
    </location>
    <ligand>
        <name>Ca(2+)</name>
        <dbReference type="ChEBI" id="CHEBI:29108"/>
    </ligand>
</feature>
<feature type="binding site" evidence="1">
    <location>
        <position position="95"/>
    </location>
    <ligand>
        <name>Ca(2+)</name>
        <dbReference type="ChEBI" id="CHEBI:29108"/>
    </ligand>
</feature>
<feature type="glycosylation site" description="N-linked (GlcNAc...) asparagine" evidence="3">
    <location>
        <position position="87"/>
    </location>
</feature>
<feature type="glycosylation site" description="N-linked (GlcNAc...) asparagine" evidence="3">
    <location>
        <position position="241"/>
    </location>
</feature>
<feature type="disulfide bond" evidence="4">
    <location>
        <begin position="56"/>
        <end position="72"/>
    </location>
</feature>
<feature type="disulfide bond" evidence="4">
    <location>
        <begin position="153"/>
        <end position="220"/>
    </location>
</feature>
<feature type="disulfide bond" evidence="4">
    <location>
        <begin position="184"/>
        <end position="200"/>
    </location>
</feature>
<feature type="disulfide bond" evidence="4">
    <location>
        <begin position="210"/>
        <end position="240"/>
    </location>
</feature>
<sequence length="266" mass="28518">MLRLLVFTSLVLYGHSTQDFPETNARVVGGTAVSKNSWPSQISLQYKSGSSWYHTCGGTLIKQKWVMTAAHCVDSQMTFRVVLGDHNLSQNDGTEQYISVQKIVVHPSWNSNNVAAGYDIAVLRLAQSATLNSYVQLGVLPQSGTILANNTPCYITGWGRTKTNGQLAQTLQQAYLPSVDYATCSSSSYWGSTVKTTMVCAGGDGVRAGCQGDSGGPLHCLVNGQYAVHGVTSFVSSLGCNVSKKPTVFTRVSAYISWINNAIASN</sequence>
<proteinExistence type="evidence at transcript level"/>
<dbReference type="EC" id="3.4.21.36"/>
<dbReference type="EMBL" id="M80838">
    <property type="protein sequence ID" value="AAA98525.1"/>
    <property type="molecule type" value="mRNA"/>
</dbReference>
<dbReference type="EMBL" id="BC149525">
    <property type="protein sequence ID" value="AAI49526.1"/>
    <property type="molecule type" value="mRNA"/>
</dbReference>
<dbReference type="RefSeq" id="NP_776473.1">
    <property type="nucleotide sequence ID" value="NM_174048.2"/>
</dbReference>
<dbReference type="RefSeq" id="XP_005206313.1">
    <property type="nucleotide sequence ID" value="XM_005206256.5"/>
</dbReference>
<dbReference type="SMR" id="Q28153"/>
<dbReference type="BioGRID" id="158500">
    <property type="interactions" value="1"/>
</dbReference>
<dbReference type="FunCoup" id="Q28153">
    <property type="interactions" value="41"/>
</dbReference>
<dbReference type="STRING" id="9913.ENSBTAP00000011718"/>
<dbReference type="BindingDB" id="Q28153"/>
<dbReference type="MEROPS" id="S01.153"/>
<dbReference type="GlyCosmos" id="Q28153">
    <property type="glycosylation" value="2 sites, No reported glycans"/>
</dbReference>
<dbReference type="GlyGen" id="Q28153">
    <property type="glycosylation" value="2 sites"/>
</dbReference>
<dbReference type="PaxDb" id="9913-ENSBTAP00000011718"/>
<dbReference type="Ensembl" id="ENSBTAT00000011718.5">
    <property type="protein sequence ID" value="ENSBTAP00000011718.4"/>
    <property type="gene ID" value="ENSBTAG00000008900.6"/>
</dbReference>
<dbReference type="GeneID" id="281139"/>
<dbReference type="KEGG" id="bta:281139"/>
<dbReference type="CTD" id="1990"/>
<dbReference type="VEuPathDB" id="HostDB:ENSBTAG00000008900"/>
<dbReference type="VGNC" id="VGNC:27166">
    <property type="gene designation" value="CELA1"/>
</dbReference>
<dbReference type="eggNOG" id="KOG3627">
    <property type="taxonomic scope" value="Eukaryota"/>
</dbReference>
<dbReference type="GeneTree" id="ENSGT01030000234528"/>
<dbReference type="HOGENOM" id="CLU_006842_0_4_1"/>
<dbReference type="InParanoid" id="Q28153"/>
<dbReference type="OMA" id="KQGCNVS"/>
<dbReference type="OrthoDB" id="10061449at2759"/>
<dbReference type="TreeFam" id="TF330455"/>
<dbReference type="Proteomes" id="UP000009136">
    <property type="component" value="Chromosome 5"/>
</dbReference>
<dbReference type="Bgee" id="ENSBTAG00000008900">
    <property type="expression patterns" value="Expressed in abomasum and 97 other cell types or tissues"/>
</dbReference>
<dbReference type="GO" id="GO:0005615">
    <property type="term" value="C:extracellular space"/>
    <property type="evidence" value="ECO:0000318"/>
    <property type="project" value="GO_Central"/>
</dbReference>
<dbReference type="GO" id="GO:0046872">
    <property type="term" value="F:metal ion binding"/>
    <property type="evidence" value="ECO:0007669"/>
    <property type="project" value="UniProtKB-KW"/>
</dbReference>
<dbReference type="GO" id="GO:0004252">
    <property type="term" value="F:serine-type endopeptidase activity"/>
    <property type="evidence" value="ECO:0000250"/>
    <property type="project" value="UniProtKB"/>
</dbReference>
<dbReference type="GO" id="GO:0060309">
    <property type="term" value="P:elastin catabolic process"/>
    <property type="evidence" value="ECO:0007669"/>
    <property type="project" value="Ensembl"/>
</dbReference>
<dbReference type="GO" id="GO:0031017">
    <property type="term" value="P:exocrine pancreas development"/>
    <property type="evidence" value="ECO:0007669"/>
    <property type="project" value="Ensembl"/>
</dbReference>
<dbReference type="GO" id="GO:0006954">
    <property type="term" value="P:inflammatory response"/>
    <property type="evidence" value="ECO:0007669"/>
    <property type="project" value="Ensembl"/>
</dbReference>
<dbReference type="GO" id="GO:0035264">
    <property type="term" value="P:multicellular organism growth"/>
    <property type="evidence" value="ECO:0007669"/>
    <property type="project" value="Ensembl"/>
</dbReference>
<dbReference type="GO" id="GO:0000122">
    <property type="term" value="P:negative regulation of transcription by RNA polymerase II"/>
    <property type="evidence" value="ECO:0007669"/>
    <property type="project" value="Ensembl"/>
</dbReference>
<dbReference type="GO" id="GO:0061113">
    <property type="term" value="P:pancreas morphogenesis"/>
    <property type="evidence" value="ECO:0007669"/>
    <property type="project" value="Ensembl"/>
</dbReference>
<dbReference type="GO" id="GO:0045766">
    <property type="term" value="P:positive regulation of angiogenesis"/>
    <property type="evidence" value="ECO:0007669"/>
    <property type="project" value="Ensembl"/>
</dbReference>
<dbReference type="GO" id="GO:0045944">
    <property type="term" value="P:positive regulation of transcription by RNA polymerase II"/>
    <property type="evidence" value="ECO:0007669"/>
    <property type="project" value="Ensembl"/>
</dbReference>
<dbReference type="GO" id="GO:0009791">
    <property type="term" value="P:post-embryonic development"/>
    <property type="evidence" value="ECO:0007669"/>
    <property type="project" value="Ensembl"/>
</dbReference>
<dbReference type="GO" id="GO:0006508">
    <property type="term" value="P:proteolysis"/>
    <property type="evidence" value="ECO:0000318"/>
    <property type="project" value="GO_Central"/>
</dbReference>
<dbReference type="GO" id="GO:0045595">
    <property type="term" value="P:regulation of cell differentiation"/>
    <property type="evidence" value="ECO:0007669"/>
    <property type="project" value="Ensembl"/>
</dbReference>
<dbReference type="GO" id="GO:0042127">
    <property type="term" value="P:regulation of cell population proliferation"/>
    <property type="evidence" value="ECO:0007669"/>
    <property type="project" value="Ensembl"/>
</dbReference>
<dbReference type="GO" id="GO:0048771">
    <property type="term" value="P:tissue remodeling"/>
    <property type="evidence" value="ECO:0007669"/>
    <property type="project" value="Ensembl"/>
</dbReference>
<dbReference type="GO" id="GO:0006366">
    <property type="term" value="P:transcription by RNA polymerase II"/>
    <property type="evidence" value="ECO:0007669"/>
    <property type="project" value="Ensembl"/>
</dbReference>
<dbReference type="GO" id="GO:0016055">
    <property type="term" value="P:Wnt signaling pathway"/>
    <property type="evidence" value="ECO:0007669"/>
    <property type="project" value="Ensembl"/>
</dbReference>
<dbReference type="CDD" id="cd00190">
    <property type="entry name" value="Tryp_SPc"/>
    <property type="match status" value="1"/>
</dbReference>
<dbReference type="FunFam" id="2.40.10.10:FF:000280">
    <property type="match status" value="1"/>
</dbReference>
<dbReference type="FunFam" id="2.40.10.10:FF:000122">
    <property type="entry name" value="Chymotrypsin-like elastase family member 1"/>
    <property type="match status" value="1"/>
</dbReference>
<dbReference type="Gene3D" id="2.40.10.10">
    <property type="entry name" value="Trypsin-like serine proteases"/>
    <property type="match status" value="2"/>
</dbReference>
<dbReference type="InterPro" id="IPR050850">
    <property type="entry name" value="Peptidase_S1_Elastase_sf"/>
</dbReference>
<dbReference type="InterPro" id="IPR009003">
    <property type="entry name" value="Peptidase_S1_PA"/>
</dbReference>
<dbReference type="InterPro" id="IPR043504">
    <property type="entry name" value="Peptidase_S1_PA_chymotrypsin"/>
</dbReference>
<dbReference type="InterPro" id="IPR001314">
    <property type="entry name" value="Peptidase_S1A"/>
</dbReference>
<dbReference type="InterPro" id="IPR001254">
    <property type="entry name" value="Trypsin_dom"/>
</dbReference>
<dbReference type="InterPro" id="IPR018114">
    <property type="entry name" value="TRYPSIN_HIS"/>
</dbReference>
<dbReference type="InterPro" id="IPR033116">
    <property type="entry name" value="TRYPSIN_SER"/>
</dbReference>
<dbReference type="PANTHER" id="PTHR24257">
    <property type="entry name" value="CHYMOTRYPSIN-LIKE ELASTASE FAMILY MEMBER"/>
    <property type="match status" value="1"/>
</dbReference>
<dbReference type="PANTHER" id="PTHR24257:SF0">
    <property type="entry name" value="CHYMOTRYPSIN-LIKE ELASTASE FAMILY MEMBER 1"/>
    <property type="match status" value="1"/>
</dbReference>
<dbReference type="Pfam" id="PF00089">
    <property type="entry name" value="Trypsin"/>
    <property type="match status" value="1"/>
</dbReference>
<dbReference type="PRINTS" id="PR00722">
    <property type="entry name" value="CHYMOTRYPSIN"/>
</dbReference>
<dbReference type="SMART" id="SM00020">
    <property type="entry name" value="Tryp_SPc"/>
    <property type="match status" value="1"/>
</dbReference>
<dbReference type="SUPFAM" id="SSF50494">
    <property type="entry name" value="Trypsin-like serine proteases"/>
    <property type="match status" value="1"/>
</dbReference>
<dbReference type="PROSITE" id="PS50240">
    <property type="entry name" value="TRYPSIN_DOM"/>
    <property type="match status" value="1"/>
</dbReference>
<dbReference type="PROSITE" id="PS00134">
    <property type="entry name" value="TRYPSIN_HIS"/>
    <property type="match status" value="1"/>
</dbReference>
<dbReference type="PROSITE" id="PS00135">
    <property type="entry name" value="TRYPSIN_SER"/>
    <property type="match status" value="1"/>
</dbReference>
<comment type="function">
    <text evidence="2">Serine proteases that hydrolyze many proteins in addition to elastin.</text>
</comment>
<comment type="catalytic activity">
    <reaction evidence="2">
        <text>Hydrolysis of proteins, including elastin. Preferential cleavage: Ala-|-Xaa.</text>
        <dbReference type="EC" id="3.4.21.36"/>
    </reaction>
</comment>
<comment type="cofactor">
    <cofactor evidence="1">
        <name>Ca(2+)</name>
        <dbReference type="ChEBI" id="CHEBI:29108"/>
    </cofactor>
    <text evidence="1">Binds 1 Ca(2+) ion per subunit.</text>
</comment>
<comment type="subcellular location">
    <subcellularLocation>
        <location evidence="1">Secreted</location>
    </subcellularLocation>
</comment>
<comment type="tissue specificity">
    <text>Pancreas.</text>
</comment>
<comment type="similarity">
    <text evidence="4">Belongs to the peptidase S1 family. Elastase subfamily.</text>
</comment>
<keyword id="KW-0106">Calcium</keyword>
<keyword id="KW-1015">Disulfide bond</keyword>
<keyword id="KW-0325">Glycoprotein</keyword>
<keyword id="KW-0378">Hydrolase</keyword>
<keyword id="KW-0479">Metal-binding</keyword>
<keyword id="KW-0645">Protease</keyword>
<keyword id="KW-1185">Reference proteome</keyword>
<keyword id="KW-0964">Secreted</keyword>
<keyword id="KW-0720">Serine protease</keyword>
<keyword id="KW-0732">Signal</keyword>
<keyword id="KW-0865">Zymogen</keyword>
<reference key="1">
    <citation type="journal article" date="1997" name="Comp. Biochem. Physiol.">
        <title>Bovine pancreatic preproelastases I and II: comparison of nucleotide and amino acid sequences and tissue specific expression.</title>
        <authorList>
            <person name="Gestin M."/>
            <person name="le Huerou-Luron I."/>
            <person name="Wicker-Planquart C."/>
            <person name="le Drean G."/>
            <person name="Chaix J.-C."/>
            <person name="Puigserver A."/>
            <person name="Guilloteau P."/>
        </authorList>
    </citation>
    <scope>NUCLEOTIDE SEQUENCE [MRNA]</scope>
    <source>
        <strain>Holstein-Friesian</strain>
        <tissue>Pancreas</tissue>
    </source>
</reference>
<reference key="2">
    <citation type="submission" date="2007-07" db="EMBL/GenBank/DDBJ databases">
        <authorList>
            <consortium name="NIH - Mammalian Gene Collection (MGC) project"/>
        </authorList>
    </citation>
    <scope>NUCLEOTIDE SEQUENCE [LARGE SCALE MRNA]</scope>
    <source>
        <strain>Hereford</strain>
        <tissue>Fetal pancreas</tissue>
    </source>
</reference>
<accession>Q28153</accession>
<accession>A6QPW5</accession>
<organism>
    <name type="scientific">Bos taurus</name>
    <name type="common">Bovine</name>
    <dbReference type="NCBI Taxonomy" id="9913"/>
    <lineage>
        <taxon>Eukaryota</taxon>
        <taxon>Metazoa</taxon>
        <taxon>Chordata</taxon>
        <taxon>Craniata</taxon>
        <taxon>Vertebrata</taxon>
        <taxon>Euteleostomi</taxon>
        <taxon>Mammalia</taxon>
        <taxon>Eutheria</taxon>
        <taxon>Laurasiatheria</taxon>
        <taxon>Artiodactyla</taxon>
        <taxon>Ruminantia</taxon>
        <taxon>Pecora</taxon>
        <taxon>Bovidae</taxon>
        <taxon>Bovinae</taxon>
        <taxon>Bos</taxon>
    </lineage>
</organism>
<evidence type="ECO:0000250" key="1">
    <source>
        <dbReference type="UniProtKB" id="P00772"/>
    </source>
</evidence>
<evidence type="ECO:0000250" key="2">
    <source>
        <dbReference type="UniProtKB" id="Q91X79"/>
    </source>
</evidence>
<evidence type="ECO:0000255" key="3"/>
<evidence type="ECO:0000255" key="4">
    <source>
        <dbReference type="PROSITE-ProRule" id="PRU00274"/>
    </source>
</evidence>
<name>CELA1_BOVIN</name>
<gene>
    <name type="primary">CELA1</name>
    <name type="synonym">ELA1</name>
</gene>